<name>Y470_ABVP</name>
<gene>
    <name type="ORF">ORF470</name>
</gene>
<proteinExistence type="predicted"/>
<reference key="1">
    <citation type="journal article" date="2007" name="Virology">
        <title>Genome of the Acidianus bottle-shaped virus and insights into the replication and packaging mechanisms.</title>
        <authorList>
            <person name="Peng X."/>
            <person name="Basta T."/>
            <person name="Haring M."/>
            <person name="Garrett R.A."/>
            <person name="Prangishvili D."/>
        </authorList>
    </citation>
    <scope>NUCLEOTIDE SEQUENCE [GENOMIC DNA]</scope>
</reference>
<evidence type="ECO:0000255" key="1"/>
<evidence type="ECO:0000256" key="2">
    <source>
        <dbReference type="SAM" id="MobiDB-lite"/>
    </source>
</evidence>
<organism>
    <name type="scientific">Acidianus bottle-shaped virus (isolate Italy/Pozzuoli)</name>
    <name type="common">ABV</name>
    <dbReference type="NCBI Taxonomy" id="654911"/>
    <lineage>
        <taxon>Viruses</taxon>
        <taxon>Viruses incertae sedis</taxon>
        <taxon>Ampullaviridae</taxon>
        <taxon>Bottigliavirus</taxon>
        <taxon>Bottigliavirus ABV</taxon>
    </lineage>
</organism>
<sequence length="470" mass="53329">MSYANNNGSLSVPQYISTIDLTTETKPKFVKYFYYTVFNFAKQYTNPLILPFPITLEIIYHGDIDIGANLFSSKTFAVEEVSGSKFHISGQGTAYFWYRYGHIDPASFDLIAQTAISNKDWLVLDAILHTRSFIEAIDFLVNNPQTWTIIAEGLDWQLNEIGARDLFAYLTNNSYDTRKLAQFLTILAYIDPDVLVKVGIPVYTCDNPNKTFEKYLNYLPASPLVPIYSELSEQSSEISELFIQTSELSDDVLALMAQIVKIYYQLSEQQSEISELNIESLIHSSEITQLFFITSEQSFQISDLFTETSEIIFNLDQLSENLILFTNAGQIINNFLKMVHLFKAVLIILKILQHAVKTIAPVSELGILTDLGQLLDNILGMTSESIFYYTSELDIRGIIQTLVNLINQLLGINITLSSECCEEQEEKEKKKEKEKEKKKEKDDDDDQQNNNNNDQNGLGLGLGLNFGLNL</sequence>
<accession>A4ZUD2</accession>
<protein>
    <recommendedName>
        <fullName>Uncharacterized protein ORF470</fullName>
    </recommendedName>
</protein>
<dbReference type="EMBL" id="EF432053">
    <property type="protein sequence ID" value="ABP73436.1"/>
    <property type="molecule type" value="Genomic_DNA"/>
</dbReference>
<dbReference type="RefSeq" id="YP_001210350.1">
    <property type="nucleotide sequence ID" value="NC_009452.1"/>
</dbReference>
<dbReference type="SMR" id="A4ZUD2"/>
<dbReference type="GeneID" id="5129827"/>
<dbReference type="KEGG" id="vg:5129827"/>
<dbReference type="Proteomes" id="UP000000513">
    <property type="component" value="Segment"/>
</dbReference>
<organismHost>
    <name type="scientific">Acidianus convivator</name>
    <dbReference type="NCBI Taxonomy" id="269667"/>
</organismHost>
<keyword id="KW-0175">Coiled coil</keyword>
<keyword id="KW-1185">Reference proteome</keyword>
<feature type="chain" id="PRO_0000384869" description="Uncharacterized protein ORF470">
    <location>
        <begin position="1"/>
        <end position="470"/>
    </location>
</feature>
<feature type="region of interest" description="Disordered" evidence="2">
    <location>
        <begin position="423"/>
        <end position="470"/>
    </location>
</feature>
<feature type="coiled-coil region" evidence="1">
    <location>
        <begin position="418"/>
        <end position="453"/>
    </location>
</feature>
<feature type="compositionally biased region" description="Basic and acidic residues" evidence="2">
    <location>
        <begin position="426"/>
        <end position="441"/>
    </location>
</feature>
<feature type="compositionally biased region" description="Low complexity" evidence="2">
    <location>
        <begin position="448"/>
        <end position="457"/>
    </location>
</feature>